<feature type="chain" id="PRO_1000120996" description="Large ribosomal subunit protein uL10">
    <location>
        <begin position="1"/>
        <end position="179"/>
    </location>
</feature>
<evidence type="ECO:0000255" key="1">
    <source>
        <dbReference type="HAMAP-Rule" id="MF_00362"/>
    </source>
</evidence>
<evidence type="ECO:0000305" key="2"/>
<name>RL10_POLNS</name>
<proteinExistence type="inferred from homology"/>
<accession>B1XSP1</accession>
<comment type="function">
    <text evidence="1">Forms part of the ribosomal stalk, playing a central role in the interaction of the ribosome with GTP-bound translation factors.</text>
</comment>
<comment type="subunit">
    <text evidence="1">Part of the ribosomal stalk of the 50S ribosomal subunit. The N-terminus interacts with L11 and the large rRNA to form the base of the stalk. The C-terminus forms an elongated spine to which L12 dimers bind in a sequential fashion forming a multimeric L10(L12)X complex.</text>
</comment>
<comment type="similarity">
    <text evidence="1">Belongs to the universal ribosomal protein uL10 family.</text>
</comment>
<reference key="1">
    <citation type="journal article" date="2013" name="Proc. Natl. Acad. Sci. U.S.A.">
        <title>Polynucleobacter necessarius, a model for genome reduction in both free-living and symbiotic bacteria.</title>
        <authorList>
            <person name="Boscaro V."/>
            <person name="Felletti M."/>
            <person name="Vannini C."/>
            <person name="Ackerman M.S."/>
            <person name="Chain P.S."/>
            <person name="Malfatti S."/>
            <person name="Vergez L.M."/>
            <person name="Shin M."/>
            <person name="Doak T.G."/>
            <person name="Lynch M."/>
            <person name="Petroni G."/>
        </authorList>
    </citation>
    <scope>NUCLEOTIDE SEQUENCE [LARGE SCALE GENOMIC DNA]</scope>
    <source>
        <strain>STIR1</strain>
    </source>
</reference>
<protein>
    <recommendedName>
        <fullName evidence="1">Large ribosomal subunit protein uL10</fullName>
    </recommendedName>
    <alternativeName>
        <fullName evidence="2">50S ribosomal protein L10</fullName>
    </alternativeName>
</protein>
<sequence>MPLNVQDKKAIVADVGAQLAGAQTVVLAEYRGIPVEQLTKLRASARDQGVYLRVLKNTLARRAAQGTQFEPLADSMVGPLIYGISADPIASAKVLQNFAKTQDKLVITAGLYNGKLLDVAGVKALATIPSRDELLSQLLGVMLAPVSAMARVLGAVAAQKAAGAPAEAGTEANETPAAE</sequence>
<gene>
    <name evidence="1" type="primary">rplJ</name>
    <name type="ordered locus">Pnec_0040</name>
</gene>
<dbReference type="EMBL" id="CP001010">
    <property type="protein sequence ID" value="ACB43368.1"/>
    <property type="molecule type" value="Genomic_DNA"/>
</dbReference>
<dbReference type="STRING" id="452638.Pnec_0040"/>
<dbReference type="KEGG" id="pne:Pnec_0040"/>
<dbReference type="eggNOG" id="COG0244">
    <property type="taxonomic scope" value="Bacteria"/>
</dbReference>
<dbReference type="HOGENOM" id="CLU_092227_0_0_4"/>
<dbReference type="OrthoDB" id="9808307at2"/>
<dbReference type="GO" id="GO:1990904">
    <property type="term" value="C:ribonucleoprotein complex"/>
    <property type="evidence" value="ECO:0007669"/>
    <property type="project" value="UniProtKB-KW"/>
</dbReference>
<dbReference type="GO" id="GO:0005840">
    <property type="term" value="C:ribosome"/>
    <property type="evidence" value="ECO:0007669"/>
    <property type="project" value="UniProtKB-KW"/>
</dbReference>
<dbReference type="GO" id="GO:0070180">
    <property type="term" value="F:large ribosomal subunit rRNA binding"/>
    <property type="evidence" value="ECO:0007669"/>
    <property type="project" value="UniProtKB-UniRule"/>
</dbReference>
<dbReference type="GO" id="GO:0006412">
    <property type="term" value="P:translation"/>
    <property type="evidence" value="ECO:0007669"/>
    <property type="project" value="UniProtKB-UniRule"/>
</dbReference>
<dbReference type="CDD" id="cd05797">
    <property type="entry name" value="Ribosomal_L10"/>
    <property type="match status" value="1"/>
</dbReference>
<dbReference type="Gene3D" id="3.30.70.1730">
    <property type="match status" value="1"/>
</dbReference>
<dbReference type="Gene3D" id="6.10.250.290">
    <property type="match status" value="1"/>
</dbReference>
<dbReference type="HAMAP" id="MF_00362">
    <property type="entry name" value="Ribosomal_uL10"/>
    <property type="match status" value="1"/>
</dbReference>
<dbReference type="InterPro" id="IPR001790">
    <property type="entry name" value="Ribosomal_uL10"/>
</dbReference>
<dbReference type="InterPro" id="IPR043141">
    <property type="entry name" value="Ribosomal_uL10-like_sf"/>
</dbReference>
<dbReference type="InterPro" id="IPR022973">
    <property type="entry name" value="Ribosomal_uL10_bac"/>
</dbReference>
<dbReference type="InterPro" id="IPR047865">
    <property type="entry name" value="Ribosomal_uL10_bac_type"/>
</dbReference>
<dbReference type="NCBIfam" id="NF000955">
    <property type="entry name" value="PRK00099.1-1"/>
    <property type="match status" value="1"/>
</dbReference>
<dbReference type="PANTHER" id="PTHR11560">
    <property type="entry name" value="39S RIBOSOMAL PROTEIN L10, MITOCHONDRIAL"/>
    <property type="match status" value="1"/>
</dbReference>
<dbReference type="Pfam" id="PF00466">
    <property type="entry name" value="Ribosomal_L10"/>
    <property type="match status" value="1"/>
</dbReference>
<dbReference type="SUPFAM" id="SSF160369">
    <property type="entry name" value="Ribosomal protein L10-like"/>
    <property type="match status" value="1"/>
</dbReference>
<keyword id="KW-0687">Ribonucleoprotein</keyword>
<keyword id="KW-0689">Ribosomal protein</keyword>
<keyword id="KW-0694">RNA-binding</keyword>
<keyword id="KW-0699">rRNA-binding</keyword>
<organism>
    <name type="scientific">Polynucleobacter necessarius subsp. necessarius (strain STIR1)</name>
    <dbReference type="NCBI Taxonomy" id="452638"/>
    <lineage>
        <taxon>Bacteria</taxon>
        <taxon>Pseudomonadati</taxon>
        <taxon>Pseudomonadota</taxon>
        <taxon>Betaproteobacteria</taxon>
        <taxon>Burkholderiales</taxon>
        <taxon>Burkholderiaceae</taxon>
        <taxon>Polynucleobacter</taxon>
    </lineage>
</organism>